<accession>Q5E7J5</accession>
<feature type="chain" id="PRO_0000258320" description="Phosphopentomutase">
    <location>
        <begin position="1"/>
        <end position="410"/>
    </location>
</feature>
<feature type="binding site" evidence="1">
    <location>
        <position position="10"/>
    </location>
    <ligand>
        <name>Mn(2+)</name>
        <dbReference type="ChEBI" id="CHEBI:29035"/>
        <label>1</label>
    </ligand>
</feature>
<feature type="binding site" evidence="1">
    <location>
        <position position="309"/>
    </location>
    <ligand>
        <name>Mn(2+)</name>
        <dbReference type="ChEBI" id="CHEBI:29035"/>
        <label>2</label>
    </ligand>
</feature>
<feature type="binding site" evidence="1">
    <location>
        <position position="314"/>
    </location>
    <ligand>
        <name>Mn(2+)</name>
        <dbReference type="ChEBI" id="CHEBI:29035"/>
        <label>2</label>
    </ligand>
</feature>
<feature type="binding site" evidence="1">
    <location>
        <position position="350"/>
    </location>
    <ligand>
        <name>Mn(2+)</name>
        <dbReference type="ChEBI" id="CHEBI:29035"/>
        <label>1</label>
    </ligand>
</feature>
<feature type="binding site" evidence="1">
    <location>
        <position position="351"/>
    </location>
    <ligand>
        <name>Mn(2+)</name>
        <dbReference type="ChEBI" id="CHEBI:29035"/>
        <label>1</label>
    </ligand>
</feature>
<feature type="binding site" evidence="1">
    <location>
        <position position="362"/>
    </location>
    <ligand>
        <name>Mn(2+)</name>
        <dbReference type="ChEBI" id="CHEBI:29035"/>
        <label>2</label>
    </ligand>
</feature>
<proteinExistence type="inferred from homology"/>
<name>DEOB_ALIF1</name>
<keyword id="KW-0963">Cytoplasm</keyword>
<keyword id="KW-0413">Isomerase</keyword>
<keyword id="KW-0464">Manganese</keyword>
<keyword id="KW-0479">Metal-binding</keyword>
<keyword id="KW-1185">Reference proteome</keyword>
<reference key="1">
    <citation type="journal article" date="2005" name="Proc. Natl. Acad. Sci. U.S.A.">
        <title>Complete genome sequence of Vibrio fischeri: a symbiotic bacterium with pathogenic congeners.</title>
        <authorList>
            <person name="Ruby E.G."/>
            <person name="Urbanowski M."/>
            <person name="Campbell J."/>
            <person name="Dunn A."/>
            <person name="Faini M."/>
            <person name="Gunsalus R."/>
            <person name="Lostroh P."/>
            <person name="Lupp C."/>
            <person name="McCann J."/>
            <person name="Millikan D."/>
            <person name="Schaefer A."/>
            <person name="Stabb E."/>
            <person name="Stevens A."/>
            <person name="Visick K."/>
            <person name="Whistler C."/>
            <person name="Greenberg E.P."/>
        </authorList>
    </citation>
    <scope>NUCLEOTIDE SEQUENCE [LARGE SCALE GENOMIC DNA]</scope>
    <source>
        <strain>ATCC 700601 / ES114</strain>
    </source>
</reference>
<organism>
    <name type="scientific">Aliivibrio fischeri (strain ATCC 700601 / ES114)</name>
    <name type="common">Vibrio fischeri</name>
    <dbReference type="NCBI Taxonomy" id="312309"/>
    <lineage>
        <taxon>Bacteria</taxon>
        <taxon>Pseudomonadati</taxon>
        <taxon>Pseudomonadota</taxon>
        <taxon>Gammaproteobacteria</taxon>
        <taxon>Vibrionales</taxon>
        <taxon>Vibrionaceae</taxon>
        <taxon>Aliivibrio</taxon>
    </lineage>
</organism>
<evidence type="ECO:0000255" key="1">
    <source>
        <dbReference type="HAMAP-Rule" id="MF_00740"/>
    </source>
</evidence>
<comment type="function">
    <text evidence="1">Isomerase that catalyzes the conversion of deoxy-ribose 1-phosphate (dRib-1-P) and ribose 1-phosphate (Rib-1-P) to deoxy-ribose 5-phosphate (dRib-5-P) and ribose 5-phosphate (Rib-5-P), respectively.</text>
</comment>
<comment type="catalytic activity">
    <reaction evidence="1">
        <text>2-deoxy-alpha-D-ribose 1-phosphate = 2-deoxy-D-ribose 5-phosphate</text>
        <dbReference type="Rhea" id="RHEA:27658"/>
        <dbReference type="ChEBI" id="CHEBI:57259"/>
        <dbReference type="ChEBI" id="CHEBI:62877"/>
        <dbReference type="EC" id="5.4.2.7"/>
    </reaction>
</comment>
<comment type="catalytic activity">
    <reaction evidence="1">
        <text>alpha-D-ribose 1-phosphate = D-ribose 5-phosphate</text>
        <dbReference type="Rhea" id="RHEA:18793"/>
        <dbReference type="ChEBI" id="CHEBI:57720"/>
        <dbReference type="ChEBI" id="CHEBI:78346"/>
        <dbReference type="EC" id="5.4.2.7"/>
    </reaction>
</comment>
<comment type="cofactor">
    <cofactor evidence="1">
        <name>Mn(2+)</name>
        <dbReference type="ChEBI" id="CHEBI:29035"/>
    </cofactor>
    <text evidence="1">Binds 2 manganese ions.</text>
</comment>
<comment type="pathway">
    <text evidence="1">Carbohydrate degradation; 2-deoxy-D-ribose 1-phosphate degradation; D-glyceraldehyde 3-phosphate and acetaldehyde from 2-deoxy-alpha-D-ribose 1-phosphate: step 1/2.</text>
</comment>
<comment type="subcellular location">
    <subcellularLocation>
        <location evidence="1">Cytoplasm</location>
    </subcellularLocation>
</comment>
<comment type="similarity">
    <text evidence="1">Belongs to the phosphopentomutase family.</text>
</comment>
<sequence>MKRAIILVLDSFGIGAAGDADKFGDVGSDTMGHIAEQCDKGLADNGNRKGPLTLPNLSKLGLAMAGKESTGKFSAGLDANAEIIGAYGHAAELSSGKDTPSGHWEIAGVPVLFDWGYFTDKENSFPKELTDRILERANLPGYLGNCHASGTQVLDDLGEEHMKTGMPIFYTSADSVFQIACHEETFGLDNLLTLCQIAREELEDYNIGRVIARPFIGPGKGQFERTGNRRDLSVEPPAATILQKLVDEKGGQVHSIGKISDIYAGCGITKKTKATGIPALFDATKEAIEQAIEQAGDNTIVFTNFVDFDSAYGHRRDVAGYAAALEYFDGRLPEIMDMLQEDDILILTADHGCDPTWPGTDHTREHIPVLVYGHKVPAGSLGRRDTFADIGQTLAEYFETSDMEYGKSFL</sequence>
<dbReference type="EC" id="5.4.2.7" evidence="1"/>
<dbReference type="EMBL" id="CP000020">
    <property type="protein sequence ID" value="AAW85001.1"/>
    <property type="molecule type" value="Genomic_DNA"/>
</dbReference>
<dbReference type="RefSeq" id="WP_011261274.1">
    <property type="nucleotide sequence ID" value="NC_006840.2"/>
</dbReference>
<dbReference type="RefSeq" id="YP_203889.1">
    <property type="nucleotide sequence ID" value="NC_006840.2"/>
</dbReference>
<dbReference type="SMR" id="Q5E7J5"/>
<dbReference type="STRING" id="312309.VF_0506"/>
<dbReference type="EnsemblBacteria" id="AAW85001">
    <property type="protein sequence ID" value="AAW85001"/>
    <property type="gene ID" value="VF_0506"/>
</dbReference>
<dbReference type="GeneID" id="54163143"/>
<dbReference type="KEGG" id="vfi:VF_0506"/>
<dbReference type="PATRIC" id="fig|312309.11.peg.497"/>
<dbReference type="eggNOG" id="COG1015">
    <property type="taxonomic scope" value="Bacteria"/>
</dbReference>
<dbReference type="HOGENOM" id="CLU_053861_0_0_6"/>
<dbReference type="OrthoDB" id="9769930at2"/>
<dbReference type="UniPathway" id="UPA00002">
    <property type="reaction ID" value="UER00467"/>
</dbReference>
<dbReference type="Proteomes" id="UP000000537">
    <property type="component" value="Chromosome I"/>
</dbReference>
<dbReference type="GO" id="GO:0005829">
    <property type="term" value="C:cytosol"/>
    <property type="evidence" value="ECO:0007669"/>
    <property type="project" value="TreeGrafter"/>
</dbReference>
<dbReference type="GO" id="GO:0000287">
    <property type="term" value="F:magnesium ion binding"/>
    <property type="evidence" value="ECO:0007669"/>
    <property type="project" value="InterPro"/>
</dbReference>
<dbReference type="GO" id="GO:0030145">
    <property type="term" value="F:manganese ion binding"/>
    <property type="evidence" value="ECO:0007669"/>
    <property type="project" value="UniProtKB-UniRule"/>
</dbReference>
<dbReference type="GO" id="GO:0008973">
    <property type="term" value="F:phosphopentomutase activity"/>
    <property type="evidence" value="ECO:0007669"/>
    <property type="project" value="UniProtKB-UniRule"/>
</dbReference>
<dbReference type="GO" id="GO:0006018">
    <property type="term" value="P:2-deoxyribose 1-phosphate catabolic process"/>
    <property type="evidence" value="ECO:0007669"/>
    <property type="project" value="UniProtKB-UniRule"/>
</dbReference>
<dbReference type="GO" id="GO:0006015">
    <property type="term" value="P:5-phosphoribose 1-diphosphate biosynthetic process"/>
    <property type="evidence" value="ECO:0007669"/>
    <property type="project" value="UniProtKB-UniPathway"/>
</dbReference>
<dbReference type="GO" id="GO:0043094">
    <property type="term" value="P:metabolic compound salvage"/>
    <property type="evidence" value="ECO:0007669"/>
    <property type="project" value="InterPro"/>
</dbReference>
<dbReference type="GO" id="GO:0009117">
    <property type="term" value="P:nucleotide metabolic process"/>
    <property type="evidence" value="ECO:0007669"/>
    <property type="project" value="InterPro"/>
</dbReference>
<dbReference type="CDD" id="cd16009">
    <property type="entry name" value="PPM"/>
    <property type="match status" value="1"/>
</dbReference>
<dbReference type="FunFam" id="3.30.70.1250:FF:000001">
    <property type="entry name" value="Phosphopentomutase"/>
    <property type="match status" value="1"/>
</dbReference>
<dbReference type="Gene3D" id="3.40.720.10">
    <property type="entry name" value="Alkaline Phosphatase, subunit A"/>
    <property type="match status" value="1"/>
</dbReference>
<dbReference type="Gene3D" id="3.30.70.1250">
    <property type="entry name" value="Phosphopentomutase"/>
    <property type="match status" value="1"/>
</dbReference>
<dbReference type="HAMAP" id="MF_00740">
    <property type="entry name" value="Phosphopentomut"/>
    <property type="match status" value="1"/>
</dbReference>
<dbReference type="InterPro" id="IPR017850">
    <property type="entry name" value="Alkaline_phosphatase_core_sf"/>
</dbReference>
<dbReference type="InterPro" id="IPR010045">
    <property type="entry name" value="DeoB"/>
</dbReference>
<dbReference type="InterPro" id="IPR006124">
    <property type="entry name" value="Metalloenzyme"/>
</dbReference>
<dbReference type="InterPro" id="IPR024052">
    <property type="entry name" value="Phosphopentomutase_DeoB_cap_sf"/>
</dbReference>
<dbReference type="NCBIfam" id="TIGR01696">
    <property type="entry name" value="deoB"/>
    <property type="match status" value="1"/>
</dbReference>
<dbReference type="NCBIfam" id="NF003766">
    <property type="entry name" value="PRK05362.1"/>
    <property type="match status" value="1"/>
</dbReference>
<dbReference type="PANTHER" id="PTHR21110">
    <property type="entry name" value="PHOSPHOPENTOMUTASE"/>
    <property type="match status" value="1"/>
</dbReference>
<dbReference type="PANTHER" id="PTHR21110:SF0">
    <property type="entry name" value="PHOSPHOPENTOMUTASE"/>
    <property type="match status" value="1"/>
</dbReference>
<dbReference type="Pfam" id="PF01676">
    <property type="entry name" value="Metalloenzyme"/>
    <property type="match status" value="1"/>
</dbReference>
<dbReference type="PIRSF" id="PIRSF001491">
    <property type="entry name" value="Ppentomutase"/>
    <property type="match status" value="1"/>
</dbReference>
<dbReference type="SUPFAM" id="SSF53649">
    <property type="entry name" value="Alkaline phosphatase-like"/>
    <property type="match status" value="1"/>
</dbReference>
<dbReference type="SUPFAM" id="SSF143856">
    <property type="entry name" value="DeoB insert domain-like"/>
    <property type="match status" value="1"/>
</dbReference>
<gene>
    <name evidence="1" type="primary">deoB</name>
    <name type="ordered locus">VF_0506</name>
</gene>
<protein>
    <recommendedName>
        <fullName evidence="1">Phosphopentomutase</fullName>
        <ecNumber evidence="1">5.4.2.7</ecNumber>
    </recommendedName>
    <alternativeName>
        <fullName evidence="1">Phosphodeoxyribomutase</fullName>
    </alternativeName>
</protein>